<protein>
    <recommendedName>
        <fullName evidence="1">GTP cyclohydrolase 1</fullName>
        <ecNumber evidence="1">3.5.4.16</ecNumber>
    </recommendedName>
    <alternativeName>
        <fullName evidence="1">GTP cyclohydrolase I</fullName>
        <shortName evidence="1">GTP-CH-I</shortName>
    </alternativeName>
</protein>
<name>GCH1_BACC3</name>
<evidence type="ECO:0000255" key="1">
    <source>
        <dbReference type="HAMAP-Rule" id="MF_00223"/>
    </source>
</evidence>
<reference key="1">
    <citation type="submission" date="2009-02" db="EMBL/GenBank/DDBJ databases">
        <title>Genome sequence of Bacillus cereus 03BB102.</title>
        <authorList>
            <person name="Dodson R.J."/>
            <person name="Jackson P."/>
            <person name="Munk A.C."/>
            <person name="Brettin T."/>
            <person name="Bruce D."/>
            <person name="Detter C."/>
            <person name="Tapia R."/>
            <person name="Han C."/>
            <person name="Sutton G."/>
            <person name="Sims D."/>
        </authorList>
    </citation>
    <scope>NUCLEOTIDE SEQUENCE [LARGE SCALE GENOMIC DNA]</scope>
    <source>
        <strain>03BB102</strain>
    </source>
</reference>
<gene>
    <name evidence="1" type="primary">folE</name>
    <name type="ordered locus">BCA_1570</name>
</gene>
<accession>C1EN08</accession>
<keyword id="KW-0342">GTP-binding</keyword>
<keyword id="KW-0378">Hydrolase</keyword>
<keyword id="KW-0479">Metal-binding</keyword>
<keyword id="KW-0547">Nucleotide-binding</keyword>
<keyword id="KW-0554">One-carbon metabolism</keyword>
<keyword id="KW-0862">Zinc</keyword>
<organism>
    <name type="scientific">Bacillus cereus (strain 03BB102)</name>
    <dbReference type="NCBI Taxonomy" id="572264"/>
    <lineage>
        <taxon>Bacteria</taxon>
        <taxon>Bacillati</taxon>
        <taxon>Bacillota</taxon>
        <taxon>Bacilli</taxon>
        <taxon>Bacillales</taxon>
        <taxon>Bacillaceae</taxon>
        <taxon>Bacillus</taxon>
        <taxon>Bacillus cereus group</taxon>
    </lineage>
</organism>
<feature type="chain" id="PRO_1000124908" description="GTP cyclohydrolase 1">
    <location>
        <begin position="1"/>
        <end position="189"/>
    </location>
</feature>
<feature type="binding site" evidence="1">
    <location>
        <position position="78"/>
    </location>
    <ligand>
        <name>Zn(2+)</name>
        <dbReference type="ChEBI" id="CHEBI:29105"/>
    </ligand>
</feature>
<feature type="binding site" evidence="1">
    <location>
        <position position="81"/>
    </location>
    <ligand>
        <name>Zn(2+)</name>
        <dbReference type="ChEBI" id="CHEBI:29105"/>
    </ligand>
</feature>
<feature type="binding site" evidence="1">
    <location>
        <position position="150"/>
    </location>
    <ligand>
        <name>Zn(2+)</name>
        <dbReference type="ChEBI" id="CHEBI:29105"/>
    </ligand>
</feature>
<dbReference type="EC" id="3.5.4.16" evidence="1"/>
<dbReference type="EMBL" id="CP001407">
    <property type="protein sequence ID" value="ACO27852.1"/>
    <property type="molecule type" value="Genomic_DNA"/>
</dbReference>
<dbReference type="RefSeq" id="WP_001151482.1">
    <property type="nucleotide sequence ID" value="NZ_CP009318.1"/>
</dbReference>
<dbReference type="SMR" id="C1EN08"/>
<dbReference type="GeneID" id="93009529"/>
<dbReference type="KEGG" id="bcx:BCA_1570"/>
<dbReference type="PATRIC" id="fig|572264.18.peg.1518"/>
<dbReference type="UniPathway" id="UPA00848">
    <property type="reaction ID" value="UER00151"/>
</dbReference>
<dbReference type="Proteomes" id="UP000002210">
    <property type="component" value="Chromosome"/>
</dbReference>
<dbReference type="GO" id="GO:0005737">
    <property type="term" value="C:cytoplasm"/>
    <property type="evidence" value="ECO:0007669"/>
    <property type="project" value="TreeGrafter"/>
</dbReference>
<dbReference type="GO" id="GO:0005525">
    <property type="term" value="F:GTP binding"/>
    <property type="evidence" value="ECO:0007669"/>
    <property type="project" value="UniProtKB-KW"/>
</dbReference>
<dbReference type="GO" id="GO:0003934">
    <property type="term" value="F:GTP cyclohydrolase I activity"/>
    <property type="evidence" value="ECO:0007669"/>
    <property type="project" value="UniProtKB-UniRule"/>
</dbReference>
<dbReference type="GO" id="GO:0008270">
    <property type="term" value="F:zinc ion binding"/>
    <property type="evidence" value="ECO:0007669"/>
    <property type="project" value="UniProtKB-UniRule"/>
</dbReference>
<dbReference type="GO" id="GO:0006730">
    <property type="term" value="P:one-carbon metabolic process"/>
    <property type="evidence" value="ECO:0007669"/>
    <property type="project" value="UniProtKB-UniRule"/>
</dbReference>
<dbReference type="GO" id="GO:0006729">
    <property type="term" value="P:tetrahydrobiopterin biosynthetic process"/>
    <property type="evidence" value="ECO:0007669"/>
    <property type="project" value="TreeGrafter"/>
</dbReference>
<dbReference type="GO" id="GO:0046654">
    <property type="term" value="P:tetrahydrofolate biosynthetic process"/>
    <property type="evidence" value="ECO:0007669"/>
    <property type="project" value="UniProtKB-UniRule"/>
</dbReference>
<dbReference type="CDD" id="cd00642">
    <property type="entry name" value="GTP_cyclohydro1"/>
    <property type="match status" value="1"/>
</dbReference>
<dbReference type="FunFam" id="1.10.286.10:FF:000001">
    <property type="entry name" value="GTP cyclohydrolase 1"/>
    <property type="match status" value="1"/>
</dbReference>
<dbReference type="FunFam" id="3.30.1130.10:FF:000001">
    <property type="entry name" value="GTP cyclohydrolase 1"/>
    <property type="match status" value="1"/>
</dbReference>
<dbReference type="Gene3D" id="1.10.286.10">
    <property type="match status" value="1"/>
</dbReference>
<dbReference type="Gene3D" id="3.30.1130.10">
    <property type="match status" value="1"/>
</dbReference>
<dbReference type="HAMAP" id="MF_00223">
    <property type="entry name" value="FolE"/>
    <property type="match status" value="1"/>
</dbReference>
<dbReference type="InterPro" id="IPR043133">
    <property type="entry name" value="GTP-CH-I_C/QueF"/>
</dbReference>
<dbReference type="InterPro" id="IPR043134">
    <property type="entry name" value="GTP-CH-I_N"/>
</dbReference>
<dbReference type="InterPro" id="IPR001474">
    <property type="entry name" value="GTP_CycHdrlase_I"/>
</dbReference>
<dbReference type="InterPro" id="IPR018234">
    <property type="entry name" value="GTP_CycHdrlase_I_CS"/>
</dbReference>
<dbReference type="InterPro" id="IPR020602">
    <property type="entry name" value="GTP_CycHdrlase_I_dom"/>
</dbReference>
<dbReference type="NCBIfam" id="TIGR00063">
    <property type="entry name" value="folE"/>
    <property type="match status" value="1"/>
</dbReference>
<dbReference type="NCBIfam" id="NF006825">
    <property type="entry name" value="PRK09347.1-2"/>
    <property type="match status" value="1"/>
</dbReference>
<dbReference type="NCBIfam" id="NF006826">
    <property type="entry name" value="PRK09347.1-3"/>
    <property type="match status" value="1"/>
</dbReference>
<dbReference type="PANTHER" id="PTHR11109:SF7">
    <property type="entry name" value="GTP CYCLOHYDROLASE 1"/>
    <property type="match status" value="1"/>
</dbReference>
<dbReference type="PANTHER" id="PTHR11109">
    <property type="entry name" value="GTP CYCLOHYDROLASE I"/>
    <property type="match status" value="1"/>
</dbReference>
<dbReference type="Pfam" id="PF01227">
    <property type="entry name" value="GTP_cyclohydroI"/>
    <property type="match status" value="1"/>
</dbReference>
<dbReference type="SUPFAM" id="SSF55620">
    <property type="entry name" value="Tetrahydrobiopterin biosynthesis enzymes-like"/>
    <property type="match status" value="1"/>
</dbReference>
<dbReference type="PROSITE" id="PS00859">
    <property type="entry name" value="GTP_CYCLOHYDROL_1_1"/>
    <property type="match status" value="1"/>
</dbReference>
<dbReference type="PROSITE" id="PS00860">
    <property type="entry name" value="GTP_CYCLOHYDROL_1_2"/>
    <property type="match status" value="1"/>
</dbReference>
<sequence length="189" mass="21020">MAKVNLEQIEHAVRLILEAIGDDPNREGVLDTPKRVAKMYAEVFSGMHEDPKEHLHKVFGEDHEELVLVKDIPFYSMCEHHLVPFYGVAHVAYIPQGGKVTGLSKLARTVDTIARRPQLQERITSTVANSIMEVLEPHGVMVVVEAEHMCMTMRGVKKPGAKTVTTAVRGVLENDAAARSEILSFIKTK</sequence>
<proteinExistence type="inferred from homology"/>
<comment type="catalytic activity">
    <reaction evidence="1">
        <text>GTP + H2O = 7,8-dihydroneopterin 3'-triphosphate + formate + H(+)</text>
        <dbReference type="Rhea" id="RHEA:17473"/>
        <dbReference type="ChEBI" id="CHEBI:15377"/>
        <dbReference type="ChEBI" id="CHEBI:15378"/>
        <dbReference type="ChEBI" id="CHEBI:15740"/>
        <dbReference type="ChEBI" id="CHEBI:37565"/>
        <dbReference type="ChEBI" id="CHEBI:58462"/>
        <dbReference type="EC" id="3.5.4.16"/>
    </reaction>
</comment>
<comment type="pathway">
    <text evidence="1">Cofactor biosynthesis; 7,8-dihydroneopterin triphosphate biosynthesis; 7,8-dihydroneopterin triphosphate from GTP: step 1/1.</text>
</comment>
<comment type="subunit">
    <text evidence="1">Homomer.</text>
</comment>
<comment type="similarity">
    <text evidence="1">Belongs to the GTP cyclohydrolase I family.</text>
</comment>